<accession>Q612A4</accession>
<accession>A8XPW4</accession>
<protein>
    <recommendedName>
        <fullName>V-type proton ATPase subunit C</fullName>
        <shortName>V-ATPase subunit C</shortName>
    </recommendedName>
    <alternativeName>
        <fullName>Vacuolar proton pump subunit C</fullName>
    </alternativeName>
</protein>
<gene>
    <name evidence="3" type="primary">vha-11</name>
    <name evidence="5" type="ORF">CBG16826</name>
</gene>
<proteinExistence type="inferred from homology"/>
<organism>
    <name type="scientific">Caenorhabditis briggsae</name>
    <dbReference type="NCBI Taxonomy" id="6238"/>
    <lineage>
        <taxon>Eukaryota</taxon>
        <taxon>Metazoa</taxon>
        <taxon>Ecdysozoa</taxon>
        <taxon>Nematoda</taxon>
        <taxon>Chromadorea</taxon>
        <taxon>Rhabditida</taxon>
        <taxon>Rhabditina</taxon>
        <taxon>Rhabditomorpha</taxon>
        <taxon>Rhabditoidea</taxon>
        <taxon>Rhabditidae</taxon>
        <taxon>Peloderinae</taxon>
        <taxon>Caenorhabditis</taxon>
    </lineage>
</organism>
<keyword id="KW-0963">Cytoplasm</keyword>
<keyword id="KW-0217">Developmental protein</keyword>
<keyword id="KW-0375">Hydrogen ion transport</keyword>
<keyword id="KW-0406">Ion transport</keyword>
<keyword id="KW-0472">Membrane</keyword>
<keyword id="KW-1185">Reference proteome</keyword>
<keyword id="KW-0813">Transport</keyword>
<reference key="1">
    <citation type="journal article" date="2003" name="PLoS Biol.">
        <title>The genome sequence of Caenorhabditis briggsae: a platform for comparative genomics.</title>
        <authorList>
            <person name="Stein L.D."/>
            <person name="Bao Z."/>
            <person name="Blasiar D."/>
            <person name="Blumenthal T."/>
            <person name="Brent M.R."/>
            <person name="Chen N."/>
            <person name="Chinwalla A."/>
            <person name="Clarke L."/>
            <person name="Clee C."/>
            <person name="Coghlan A."/>
            <person name="Coulson A."/>
            <person name="D'Eustachio P."/>
            <person name="Fitch D.H.A."/>
            <person name="Fulton L.A."/>
            <person name="Fulton R.E."/>
            <person name="Griffiths-Jones S."/>
            <person name="Harris T.W."/>
            <person name="Hillier L.W."/>
            <person name="Kamath R."/>
            <person name="Kuwabara P.E."/>
            <person name="Mardis E.R."/>
            <person name="Marra M.A."/>
            <person name="Miner T.L."/>
            <person name="Minx P."/>
            <person name="Mullikin J.C."/>
            <person name="Plumb R.W."/>
            <person name="Rogers J."/>
            <person name="Schein J.E."/>
            <person name="Sohrmann M."/>
            <person name="Spieth J."/>
            <person name="Stajich J.E."/>
            <person name="Wei C."/>
            <person name="Willey D."/>
            <person name="Wilson R.K."/>
            <person name="Durbin R.M."/>
            <person name="Waterston R.H."/>
        </authorList>
    </citation>
    <scope>NUCLEOTIDE SEQUENCE [LARGE SCALE GENOMIC DNA]</scope>
    <source>
        <strain>AF16</strain>
    </source>
</reference>
<evidence type="ECO:0000250" key="1">
    <source>
        <dbReference type="UniProtKB" id="P21282"/>
    </source>
</evidence>
<evidence type="ECO:0000250" key="2">
    <source>
        <dbReference type="UniProtKB" id="P31412"/>
    </source>
</evidence>
<evidence type="ECO:0000250" key="3">
    <source>
        <dbReference type="UniProtKB" id="Q9XXU9"/>
    </source>
</evidence>
<evidence type="ECO:0000255" key="4"/>
<evidence type="ECO:0000312" key="5">
    <source>
        <dbReference type="WormBase" id="CBG16826"/>
    </source>
</evidence>
<name>VATC_CAEBR</name>
<comment type="function">
    <text evidence="1 2 3">Subunit of the V1 complex of vacuolar(H+)-ATPase (V-ATPase), a multisubunit enzyme composed of a peripheral complex (V1) that hydrolyzes ATP and a membrane integral complex (V0) that translocates protons (By similarity). V-ATPase is responsible for acidifying and maintaining the pH of intracellular compartments and in some cell types, is targeted to the plasma membrane, where it is responsible for acidifying the extracellular environment (By similarity). Subunit C is necessary for the assembly of the catalytic sector of the enzyme and is likely to have a specific function in its catalytic activity (By similarity). Has roles in embryogenesis and ovulation (By similarity).</text>
</comment>
<comment type="subunit">
    <text evidence="1 3">V-ATPase is a heteromultimeric enzyme made up of two complexes: the ATP-hydrolytic V1 complex and the proton translocation V0 complex. The V1 complex consists of three catalytic AB heterodimers that form a heterohexamer, three peripheral stalks each consisting of EG heterodimers, one central rotor including subunits D and F, and the regulatory subunits C and H. The proton translocation complex V0 consists of the proton transport subunit a, a ring of proteolipid subunits c9c'', rotary subunit d, subunits e and f, and the accessory subunits vah-19/Ac45 and vah-20/PRR (By similarity). Interacts with V-type proton ATPase subunits a1 unc-32, a2 vha-5 and a3 vha-6 (By similarity).</text>
</comment>
<comment type="subcellular location">
    <subcellularLocation>
        <location evidence="3">Cytoplasm</location>
    </subcellularLocation>
    <subcellularLocation>
        <location evidence="3">Membrane</location>
        <topology evidence="3">Peripheral membrane protein</topology>
    </subcellularLocation>
    <text evidence="3">In embryonic cells, detected in dot-like structures in the cytoplasm around the nuclei.</text>
</comment>
<comment type="miscellaneous">
    <text evidence="3">Vha-11 and vha-3 are transcribed on a dicistronic transcript where vha-3 is the upstream transcript and vha-11 the downstream.</text>
</comment>
<comment type="similarity">
    <text evidence="4">Belongs to the V-ATPase C subunit family.</text>
</comment>
<sequence>MSSAATSGEYWLISVPGEKGANDAWDKLNRATGNISTNSKYLIPDLKVGTLDQLVGLSDDLSKLDTSAEGVIRKLVQYFTEVLEEDKSKIAENLVIGNKDMKTYVTKFQWEGAKYPLKQSLKVLSEIIGKQITQIDNDLKMKSLAYNNLKNALASMDRKTTGSLLTKDLADLVKAEDFVLNSEYLQTIIVVVPKILVKEWETKYATLSSMVVPGSSKLLTEEGEHALYTVTLFKKVIDEFKNIARENKFIVRDFVYDEETLKAGRTERDKLLAEKQKQYAPLIRWLKINFGEIFSAYIHIKALRVFVESVLRYGLPVNFQAAVIEPAKGQSKKLRQELQKLYIHLDGSAAGPIDTLEDSPALMSLGVNEYYPYVFFKLNIDFSNK</sequence>
<dbReference type="EMBL" id="HE600944">
    <property type="protein sequence ID" value="CAP34690.1"/>
    <property type="molecule type" value="Genomic_DNA"/>
</dbReference>
<dbReference type="SMR" id="Q612A4"/>
<dbReference type="FunCoup" id="Q612A4">
    <property type="interactions" value="1310"/>
</dbReference>
<dbReference type="STRING" id="6238.Q612A4"/>
<dbReference type="EnsemblMetazoa" id="CBG16826.1">
    <property type="protein sequence ID" value="CBG16826.1"/>
    <property type="gene ID" value="WBGene00036659"/>
</dbReference>
<dbReference type="KEGG" id="cbr:CBG_16826"/>
<dbReference type="CTD" id="8587130"/>
<dbReference type="WormBase" id="CBG16826">
    <property type="protein sequence ID" value="CBP10353"/>
    <property type="gene ID" value="WBGene00036659"/>
    <property type="gene designation" value="Cbr-vha-11"/>
</dbReference>
<dbReference type="eggNOG" id="KOG2909">
    <property type="taxonomic scope" value="Eukaryota"/>
</dbReference>
<dbReference type="HOGENOM" id="CLU_017554_3_0_1"/>
<dbReference type="InParanoid" id="Q612A4"/>
<dbReference type="OMA" id="VMIWIHV"/>
<dbReference type="Proteomes" id="UP000008549">
    <property type="component" value="Unassembled WGS sequence"/>
</dbReference>
<dbReference type="GO" id="GO:0000221">
    <property type="term" value="C:vacuolar proton-transporting V-type ATPase, V1 domain"/>
    <property type="evidence" value="ECO:0000318"/>
    <property type="project" value="GO_Central"/>
</dbReference>
<dbReference type="GO" id="GO:0046961">
    <property type="term" value="F:proton-transporting ATPase activity, rotational mechanism"/>
    <property type="evidence" value="ECO:0000318"/>
    <property type="project" value="GO_Central"/>
</dbReference>
<dbReference type="GO" id="GO:0009792">
    <property type="term" value="P:embryo development ending in birth or egg hatching"/>
    <property type="evidence" value="ECO:0000250"/>
    <property type="project" value="UniProtKB"/>
</dbReference>
<dbReference type="GO" id="GO:0030728">
    <property type="term" value="P:ovulation"/>
    <property type="evidence" value="ECO:0000250"/>
    <property type="project" value="UniProtKB"/>
</dbReference>
<dbReference type="CDD" id="cd14785">
    <property type="entry name" value="V-ATPase_C"/>
    <property type="match status" value="1"/>
</dbReference>
<dbReference type="FunFam" id="3.30.70.100:FF:000002">
    <property type="entry name" value="V-type proton ATPase subunit C"/>
    <property type="match status" value="1"/>
</dbReference>
<dbReference type="Gene3D" id="3.30.70.100">
    <property type="match status" value="1"/>
</dbReference>
<dbReference type="Gene3D" id="1.20.1460.10">
    <property type="entry name" value="subunit c (vma5p) of the yeast v-atpase, domain 2"/>
    <property type="match status" value="1"/>
</dbReference>
<dbReference type="Gene3D" id="3.30.70.1180">
    <property type="entry name" value="Vacuolar atp synthase subunit c, domain 1"/>
    <property type="match status" value="1"/>
</dbReference>
<dbReference type="InterPro" id="IPR004907">
    <property type="entry name" value="ATPase_V1-cplx_csu"/>
</dbReference>
<dbReference type="InterPro" id="IPR036132">
    <property type="entry name" value="Vac_ATP_synth_c_sf"/>
</dbReference>
<dbReference type="PANTHER" id="PTHR10137">
    <property type="entry name" value="V-TYPE PROTON ATPASE SUBUNIT C"/>
    <property type="match status" value="1"/>
</dbReference>
<dbReference type="PANTHER" id="PTHR10137:SF0">
    <property type="entry name" value="V-TYPE PROTON ATPASE SUBUNIT C"/>
    <property type="match status" value="1"/>
</dbReference>
<dbReference type="Pfam" id="PF03223">
    <property type="entry name" value="V-ATPase_C"/>
    <property type="match status" value="1"/>
</dbReference>
<dbReference type="SUPFAM" id="SSF118203">
    <property type="entry name" value="Vacuolar ATP synthase subunit C"/>
    <property type="match status" value="1"/>
</dbReference>
<feature type="chain" id="PRO_0000278180" description="V-type proton ATPase subunit C">
    <location>
        <begin position="1"/>
        <end position="385"/>
    </location>
</feature>